<protein>
    <recommendedName>
        <fullName evidence="1">Probable cytosol aminopeptidase</fullName>
        <ecNumber evidence="1">3.4.11.1</ecNumber>
    </recommendedName>
    <alternativeName>
        <fullName evidence="1">Leucine aminopeptidase</fullName>
        <shortName evidence="1">LAP</shortName>
        <ecNumber evidence="1">3.4.11.10</ecNumber>
    </alternativeName>
    <alternativeName>
        <fullName evidence="1">Leucyl aminopeptidase</fullName>
    </alternativeName>
</protein>
<feature type="chain" id="PRO_0000165786" description="Probable cytosol aminopeptidase">
    <location>
        <begin position="1"/>
        <end position="506"/>
    </location>
</feature>
<feature type="active site" evidence="1">
    <location>
        <position position="290"/>
    </location>
</feature>
<feature type="active site" evidence="1">
    <location>
        <position position="364"/>
    </location>
</feature>
<feature type="binding site" evidence="1">
    <location>
        <position position="278"/>
    </location>
    <ligand>
        <name>Mn(2+)</name>
        <dbReference type="ChEBI" id="CHEBI:29035"/>
        <label>2</label>
    </ligand>
</feature>
<feature type="binding site" evidence="1">
    <location>
        <position position="283"/>
    </location>
    <ligand>
        <name>Mn(2+)</name>
        <dbReference type="ChEBI" id="CHEBI:29035"/>
        <label>1</label>
    </ligand>
</feature>
<feature type="binding site" evidence="1">
    <location>
        <position position="283"/>
    </location>
    <ligand>
        <name>Mn(2+)</name>
        <dbReference type="ChEBI" id="CHEBI:29035"/>
        <label>2</label>
    </ligand>
</feature>
<feature type="binding site" evidence="1">
    <location>
        <position position="301"/>
    </location>
    <ligand>
        <name>Mn(2+)</name>
        <dbReference type="ChEBI" id="CHEBI:29035"/>
        <label>2</label>
    </ligand>
</feature>
<feature type="binding site" evidence="1">
    <location>
        <position position="360"/>
    </location>
    <ligand>
        <name>Mn(2+)</name>
        <dbReference type="ChEBI" id="CHEBI:29035"/>
        <label>1</label>
    </ligand>
</feature>
<feature type="binding site" evidence="1">
    <location>
        <position position="362"/>
    </location>
    <ligand>
        <name>Mn(2+)</name>
        <dbReference type="ChEBI" id="CHEBI:29035"/>
        <label>1</label>
    </ligand>
</feature>
<feature type="binding site" evidence="1">
    <location>
        <position position="362"/>
    </location>
    <ligand>
        <name>Mn(2+)</name>
        <dbReference type="ChEBI" id="CHEBI:29035"/>
        <label>2</label>
    </ligand>
</feature>
<name>AMPA_RALN1</name>
<keyword id="KW-0031">Aminopeptidase</keyword>
<keyword id="KW-0963">Cytoplasm</keyword>
<keyword id="KW-0378">Hydrolase</keyword>
<keyword id="KW-0464">Manganese</keyword>
<keyword id="KW-0479">Metal-binding</keyword>
<keyword id="KW-0645">Protease</keyword>
<keyword id="KW-1185">Reference proteome</keyword>
<evidence type="ECO:0000255" key="1">
    <source>
        <dbReference type="HAMAP-Rule" id="MF_00181"/>
    </source>
</evidence>
<gene>
    <name evidence="1" type="primary">pepA</name>
    <name type="ordered locus">RSc2415</name>
    <name type="ORF">RS02700</name>
</gene>
<organism>
    <name type="scientific">Ralstonia nicotianae (strain ATCC BAA-1114 / GMI1000)</name>
    <name type="common">Ralstonia solanacearum</name>
    <dbReference type="NCBI Taxonomy" id="267608"/>
    <lineage>
        <taxon>Bacteria</taxon>
        <taxon>Pseudomonadati</taxon>
        <taxon>Pseudomonadota</taxon>
        <taxon>Betaproteobacteria</taxon>
        <taxon>Burkholderiales</taxon>
        <taxon>Burkholderiaceae</taxon>
        <taxon>Ralstonia</taxon>
        <taxon>Ralstonia solanacearum species complex</taxon>
    </lineage>
</organism>
<proteinExistence type="inferred from homology"/>
<accession>Q8XWQ8</accession>
<sequence length="506" mass="53189">MEFSTKALDWAKAGPSGALAAKSDCLVIGLFESQTLAGAAKALDVATKGLVGRLVKLGDFEGKRGTSLLLHEVAGVGAARVLLVGLGKEAEFTDRAYAEAVRTALRALSGTKAANVTWTLTQQPARDKDAAWAVLTAVTLIREAGYRFIERHPELKSKRDKSGGGLRKVMLTVDAADAKAAAVAAARGAAIANGMELTRDLGNLPSNICTPTYLANTARQIAKDFKLKVEVLGRKQIEALKMGAFLAVTKGSQEPPQFIVLRYEGGPAKQAPVVLVGKGITFDTGGISLKPGEGMDEMKFDMCGAASVLGTLRAVAEMGLKLNVIAVVPTCENMPSGIATKPGDVVTSMSGQTIEILNTDAEGRLILCDALTYVERFRPAAVIDVATLTGAVIIALGHINTGVYARSDALANALLAAGKQSLDTGWRMPLDEEYQELLKSNFADMGNIGGRPAASVTAACFLARFTEKYDWAHLDIAGTAWKSGAAKGATGRPVPLLTRFLMDRAG</sequence>
<reference key="1">
    <citation type="journal article" date="2002" name="Nature">
        <title>Genome sequence of the plant pathogen Ralstonia solanacearum.</title>
        <authorList>
            <person name="Salanoubat M."/>
            <person name="Genin S."/>
            <person name="Artiguenave F."/>
            <person name="Gouzy J."/>
            <person name="Mangenot S."/>
            <person name="Arlat M."/>
            <person name="Billault A."/>
            <person name="Brottier P."/>
            <person name="Camus J.-C."/>
            <person name="Cattolico L."/>
            <person name="Chandler M."/>
            <person name="Choisne N."/>
            <person name="Claudel-Renard C."/>
            <person name="Cunnac S."/>
            <person name="Demange N."/>
            <person name="Gaspin C."/>
            <person name="Lavie M."/>
            <person name="Moisan A."/>
            <person name="Robert C."/>
            <person name="Saurin W."/>
            <person name="Schiex T."/>
            <person name="Siguier P."/>
            <person name="Thebault P."/>
            <person name="Whalen M."/>
            <person name="Wincker P."/>
            <person name="Levy M."/>
            <person name="Weissenbach J."/>
            <person name="Boucher C.A."/>
        </authorList>
    </citation>
    <scope>NUCLEOTIDE SEQUENCE [LARGE SCALE GENOMIC DNA]</scope>
    <source>
        <strain>ATCC BAA-1114 / GMI1000</strain>
    </source>
</reference>
<dbReference type="EC" id="3.4.11.1" evidence="1"/>
<dbReference type="EC" id="3.4.11.10" evidence="1"/>
<dbReference type="EMBL" id="AL646052">
    <property type="protein sequence ID" value="CAD16122.1"/>
    <property type="molecule type" value="Genomic_DNA"/>
</dbReference>
<dbReference type="RefSeq" id="WP_011002335.1">
    <property type="nucleotide sequence ID" value="NC_003295.1"/>
</dbReference>
<dbReference type="SMR" id="Q8XWQ8"/>
<dbReference type="STRING" id="267608.RSc2415"/>
<dbReference type="MEROPS" id="M17.003"/>
<dbReference type="EnsemblBacteria" id="CAD16122">
    <property type="protein sequence ID" value="CAD16122"/>
    <property type="gene ID" value="RSc2415"/>
</dbReference>
<dbReference type="KEGG" id="rso:RSc2415"/>
<dbReference type="PATRIC" id="fig|267608.8.peg.2457"/>
<dbReference type="eggNOG" id="COG0260">
    <property type="taxonomic scope" value="Bacteria"/>
</dbReference>
<dbReference type="HOGENOM" id="CLU_013734_0_1_4"/>
<dbReference type="Proteomes" id="UP000001436">
    <property type="component" value="Chromosome"/>
</dbReference>
<dbReference type="GO" id="GO:0005737">
    <property type="term" value="C:cytoplasm"/>
    <property type="evidence" value="ECO:0007669"/>
    <property type="project" value="UniProtKB-SubCell"/>
</dbReference>
<dbReference type="GO" id="GO:0030145">
    <property type="term" value="F:manganese ion binding"/>
    <property type="evidence" value="ECO:0007669"/>
    <property type="project" value="UniProtKB-UniRule"/>
</dbReference>
<dbReference type="GO" id="GO:0070006">
    <property type="term" value="F:metalloaminopeptidase activity"/>
    <property type="evidence" value="ECO:0007669"/>
    <property type="project" value="InterPro"/>
</dbReference>
<dbReference type="GO" id="GO:0006508">
    <property type="term" value="P:proteolysis"/>
    <property type="evidence" value="ECO:0007669"/>
    <property type="project" value="UniProtKB-KW"/>
</dbReference>
<dbReference type="CDD" id="cd00433">
    <property type="entry name" value="Peptidase_M17"/>
    <property type="match status" value="1"/>
</dbReference>
<dbReference type="FunFam" id="3.40.630.10:FF:000004">
    <property type="entry name" value="Probable cytosol aminopeptidase"/>
    <property type="match status" value="1"/>
</dbReference>
<dbReference type="Gene3D" id="3.40.220.10">
    <property type="entry name" value="Leucine Aminopeptidase, subunit E, domain 1"/>
    <property type="match status" value="1"/>
</dbReference>
<dbReference type="Gene3D" id="3.40.630.10">
    <property type="entry name" value="Zn peptidases"/>
    <property type="match status" value="1"/>
</dbReference>
<dbReference type="HAMAP" id="MF_00181">
    <property type="entry name" value="Cytosol_peptidase_M17"/>
    <property type="match status" value="1"/>
</dbReference>
<dbReference type="InterPro" id="IPR011356">
    <property type="entry name" value="Leucine_aapep/pepB"/>
</dbReference>
<dbReference type="InterPro" id="IPR043472">
    <property type="entry name" value="Macro_dom-like"/>
</dbReference>
<dbReference type="InterPro" id="IPR000819">
    <property type="entry name" value="Peptidase_M17_C"/>
</dbReference>
<dbReference type="InterPro" id="IPR023042">
    <property type="entry name" value="Peptidase_M17_leu_NH2_pept"/>
</dbReference>
<dbReference type="InterPro" id="IPR008283">
    <property type="entry name" value="Peptidase_M17_N"/>
</dbReference>
<dbReference type="NCBIfam" id="NF002073">
    <property type="entry name" value="PRK00913.1-2"/>
    <property type="match status" value="1"/>
</dbReference>
<dbReference type="NCBIfam" id="NF002074">
    <property type="entry name" value="PRK00913.1-4"/>
    <property type="match status" value="1"/>
</dbReference>
<dbReference type="NCBIfam" id="NF002077">
    <property type="entry name" value="PRK00913.2-4"/>
    <property type="match status" value="1"/>
</dbReference>
<dbReference type="PANTHER" id="PTHR11963:SF23">
    <property type="entry name" value="CYTOSOL AMINOPEPTIDASE"/>
    <property type="match status" value="1"/>
</dbReference>
<dbReference type="PANTHER" id="PTHR11963">
    <property type="entry name" value="LEUCINE AMINOPEPTIDASE-RELATED"/>
    <property type="match status" value="1"/>
</dbReference>
<dbReference type="Pfam" id="PF00883">
    <property type="entry name" value="Peptidase_M17"/>
    <property type="match status" value="1"/>
</dbReference>
<dbReference type="Pfam" id="PF02789">
    <property type="entry name" value="Peptidase_M17_N"/>
    <property type="match status" value="1"/>
</dbReference>
<dbReference type="PRINTS" id="PR00481">
    <property type="entry name" value="LAMNOPPTDASE"/>
</dbReference>
<dbReference type="SUPFAM" id="SSF52949">
    <property type="entry name" value="Macro domain-like"/>
    <property type="match status" value="1"/>
</dbReference>
<dbReference type="SUPFAM" id="SSF53187">
    <property type="entry name" value="Zn-dependent exopeptidases"/>
    <property type="match status" value="1"/>
</dbReference>
<dbReference type="PROSITE" id="PS00631">
    <property type="entry name" value="CYTOSOL_AP"/>
    <property type="match status" value="1"/>
</dbReference>
<comment type="function">
    <text evidence="1">Presumably involved in the processing and regular turnover of intracellular proteins. Catalyzes the removal of unsubstituted N-terminal amino acids from various peptides.</text>
</comment>
<comment type="catalytic activity">
    <reaction evidence="1">
        <text>Release of an N-terminal amino acid, Xaa-|-Yaa-, in which Xaa is preferably Leu, but may be other amino acids including Pro although not Arg or Lys, and Yaa may be Pro. Amino acid amides and methyl esters are also readily hydrolyzed, but rates on arylamides are exceedingly low.</text>
        <dbReference type="EC" id="3.4.11.1"/>
    </reaction>
</comment>
<comment type="catalytic activity">
    <reaction evidence="1">
        <text>Release of an N-terminal amino acid, preferentially leucine, but not glutamic or aspartic acids.</text>
        <dbReference type="EC" id="3.4.11.10"/>
    </reaction>
</comment>
<comment type="cofactor">
    <cofactor evidence="1">
        <name>Mn(2+)</name>
        <dbReference type="ChEBI" id="CHEBI:29035"/>
    </cofactor>
    <text evidence="1">Binds 2 manganese ions per subunit.</text>
</comment>
<comment type="subcellular location">
    <subcellularLocation>
        <location evidence="1">Cytoplasm</location>
    </subcellularLocation>
</comment>
<comment type="similarity">
    <text evidence="1">Belongs to the peptidase M17 family.</text>
</comment>